<accession>A8FL79</accession>
<reference key="1">
    <citation type="journal article" date="2007" name="J. Bacteriol.">
        <title>The complete genome sequence of Campylobacter jejuni strain 81116 (NCTC11828).</title>
        <authorList>
            <person name="Pearson B.M."/>
            <person name="Gaskin D.J.H."/>
            <person name="Segers R.P.A.M."/>
            <person name="Wells J.M."/>
            <person name="Nuijten P.J.M."/>
            <person name="van Vliet A.H.M."/>
        </authorList>
    </citation>
    <scope>NUCLEOTIDE SEQUENCE [LARGE SCALE GENOMIC DNA]</scope>
    <source>
        <strain>81116 / NCTC 11828</strain>
    </source>
</reference>
<name>ERA_CAMJ8</name>
<organism>
    <name type="scientific">Campylobacter jejuni subsp. jejuni serotype O:6 (strain 81116 / NCTC 11828)</name>
    <dbReference type="NCBI Taxonomy" id="407148"/>
    <lineage>
        <taxon>Bacteria</taxon>
        <taxon>Pseudomonadati</taxon>
        <taxon>Campylobacterota</taxon>
        <taxon>Epsilonproteobacteria</taxon>
        <taxon>Campylobacterales</taxon>
        <taxon>Campylobacteraceae</taxon>
        <taxon>Campylobacter</taxon>
    </lineage>
</organism>
<feature type="chain" id="PRO_1000079666" description="GTPase Era">
    <location>
        <begin position="1"/>
        <end position="291"/>
    </location>
</feature>
<feature type="domain" description="Era-type G" evidence="2">
    <location>
        <begin position="2"/>
        <end position="167"/>
    </location>
</feature>
<feature type="domain" description="KH type-2" evidence="1">
    <location>
        <begin position="186"/>
        <end position="274"/>
    </location>
</feature>
<feature type="region of interest" description="G1" evidence="2">
    <location>
        <begin position="10"/>
        <end position="17"/>
    </location>
</feature>
<feature type="region of interest" description="G2" evidence="2">
    <location>
        <begin position="36"/>
        <end position="40"/>
    </location>
</feature>
<feature type="region of interest" description="G3" evidence="2">
    <location>
        <begin position="57"/>
        <end position="60"/>
    </location>
</feature>
<feature type="region of interest" description="G4" evidence="2">
    <location>
        <begin position="116"/>
        <end position="119"/>
    </location>
</feature>
<feature type="region of interest" description="G5" evidence="2">
    <location>
        <begin position="146"/>
        <end position="148"/>
    </location>
</feature>
<feature type="binding site" evidence="1">
    <location>
        <begin position="10"/>
        <end position="17"/>
    </location>
    <ligand>
        <name>GTP</name>
        <dbReference type="ChEBI" id="CHEBI:37565"/>
    </ligand>
</feature>
<feature type="binding site" evidence="1">
    <location>
        <begin position="57"/>
        <end position="61"/>
    </location>
    <ligand>
        <name>GTP</name>
        <dbReference type="ChEBI" id="CHEBI:37565"/>
    </ligand>
</feature>
<feature type="binding site" evidence="1">
    <location>
        <begin position="116"/>
        <end position="119"/>
    </location>
    <ligand>
        <name>GTP</name>
        <dbReference type="ChEBI" id="CHEBI:37565"/>
    </ligand>
</feature>
<protein>
    <recommendedName>
        <fullName evidence="1">GTPase Era</fullName>
    </recommendedName>
</protein>
<dbReference type="EMBL" id="CP000814">
    <property type="protein sequence ID" value="ABV52216.1"/>
    <property type="molecule type" value="Genomic_DNA"/>
</dbReference>
<dbReference type="RefSeq" id="WP_002866516.1">
    <property type="nucleotide sequence ID" value="NC_009839.1"/>
</dbReference>
<dbReference type="SMR" id="A8FL79"/>
<dbReference type="KEGG" id="cju:C8J_0617"/>
<dbReference type="HOGENOM" id="CLU_038009_1_0_7"/>
<dbReference type="GO" id="GO:0005829">
    <property type="term" value="C:cytosol"/>
    <property type="evidence" value="ECO:0007669"/>
    <property type="project" value="TreeGrafter"/>
</dbReference>
<dbReference type="GO" id="GO:0005886">
    <property type="term" value="C:plasma membrane"/>
    <property type="evidence" value="ECO:0007669"/>
    <property type="project" value="UniProtKB-SubCell"/>
</dbReference>
<dbReference type="GO" id="GO:0005525">
    <property type="term" value="F:GTP binding"/>
    <property type="evidence" value="ECO:0007669"/>
    <property type="project" value="UniProtKB-UniRule"/>
</dbReference>
<dbReference type="GO" id="GO:0003924">
    <property type="term" value="F:GTPase activity"/>
    <property type="evidence" value="ECO:0007669"/>
    <property type="project" value="UniProtKB-UniRule"/>
</dbReference>
<dbReference type="GO" id="GO:0043024">
    <property type="term" value="F:ribosomal small subunit binding"/>
    <property type="evidence" value="ECO:0007669"/>
    <property type="project" value="TreeGrafter"/>
</dbReference>
<dbReference type="GO" id="GO:0070181">
    <property type="term" value="F:small ribosomal subunit rRNA binding"/>
    <property type="evidence" value="ECO:0007669"/>
    <property type="project" value="UniProtKB-UniRule"/>
</dbReference>
<dbReference type="GO" id="GO:0000028">
    <property type="term" value="P:ribosomal small subunit assembly"/>
    <property type="evidence" value="ECO:0007669"/>
    <property type="project" value="TreeGrafter"/>
</dbReference>
<dbReference type="CDD" id="cd04163">
    <property type="entry name" value="Era"/>
    <property type="match status" value="1"/>
</dbReference>
<dbReference type="CDD" id="cd22534">
    <property type="entry name" value="KH-II_Era"/>
    <property type="match status" value="1"/>
</dbReference>
<dbReference type="Gene3D" id="3.30.300.20">
    <property type="match status" value="1"/>
</dbReference>
<dbReference type="Gene3D" id="3.40.50.300">
    <property type="entry name" value="P-loop containing nucleotide triphosphate hydrolases"/>
    <property type="match status" value="1"/>
</dbReference>
<dbReference type="HAMAP" id="MF_00367">
    <property type="entry name" value="GTPase_Era"/>
    <property type="match status" value="1"/>
</dbReference>
<dbReference type="InterPro" id="IPR030388">
    <property type="entry name" value="G_ERA_dom"/>
</dbReference>
<dbReference type="InterPro" id="IPR006073">
    <property type="entry name" value="GTP-bd"/>
</dbReference>
<dbReference type="InterPro" id="IPR005662">
    <property type="entry name" value="GTPase_Era-like"/>
</dbReference>
<dbReference type="InterPro" id="IPR015946">
    <property type="entry name" value="KH_dom-like_a/b"/>
</dbReference>
<dbReference type="InterPro" id="IPR004044">
    <property type="entry name" value="KH_dom_type_2"/>
</dbReference>
<dbReference type="InterPro" id="IPR009019">
    <property type="entry name" value="KH_sf_prok-type"/>
</dbReference>
<dbReference type="InterPro" id="IPR027417">
    <property type="entry name" value="P-loop_NTPase"/>
</dbReference>
<dbReference type="InterPro" id="IPR005225">
    <property type="entry name" value="Small_GTP-bd"/>
</dbReference>
<dbReference type="NCBIfam" id="TIGR00436">
    <property type="entry name" value="era"/>
    <property type="match status" value="1"/>
</dbReference>
<dbReference type="NCBIfam" id="NF000908">
    <property type="entry name" value="PRK00089.1"/>
    <property type="match status" value="1"/>
</dbReference>
<dbReference type="NCBIfam" id="TIGR00231">
    <property type="entry name" value="small_GTP"/>
    <property type="match status" value="1"/>
</dbReference>
<dbReference type="PANTHER" id="PTHR42698">
    <property type="entry name" value="GTPASE ERA"/>
    <property type="match status" value="1"/>
</dbReference>
<dbReference type="PANTHER" id="PTHR42698:SF1">
    <property type="entry name" value="GTPASE ERA, MITOCHONDRIAL"/>
    <property type="match status" value="1"/>
</dbReference>
<dbReference type="Pfam" id="PF07650">
    <property type="entry name" value="KH_2"/>
    <property type="match status" value="1"/>
</dbReference>
<dbReference type="Pfam" id="PF01926">
    <property type="entry name" value="MMR_HSR1"/>
    <property type="match status" value="1"/>
</dbReference>
<dbReference type="SUPFAM" id="SSF52540">
    <property type="entry name" value="P-loop containing nucleoside triphosphate hydrolases"/>
    <property type="match status" value="1"/>
</dbReference>
<dbReference type="SUPFAM" id="SSF54814">
    <property type="entry name" value="Prokaryotic type KH domain (KH-domain type II)"/>
    <property type="match status" value="1"/>
</dbReference>
<dbReference type="PROSITE" id="PS51713">
    <property type="entry name" value="G_ERA"/>
    <property type="match status" value="1"/>
</dbReference>
<dbReference type="PROSITE" id="PS50823">
    <property type="entry name" value="KH_TYPE_2"/>
    <property type="match status" value="1"/>
</dbReference>
<comment type="function">
    <text evidence="1">An essential GTPase that binds both GDP and GTP, with rapid nucleotide exchange. Plays a role in 16S rRNA processing and 30S ribosomal subunit biogenesis and possibly also in cell cycle regulation and energy metabolism.</text>
</comment>
<comment type="subunit">
    <text evidence="1">Monomer.</text>
</comment>
<comment type="subcellular location">
    <subcellularLocation>
        <location>Cytoplasm</location>
    </subcellularLocation>
    <subcellularLocation>
        <location evidence="1">Cell inner membrane</location>
        <topology evidence="1">Peripheral membrane protein</topology>
    </subcellularLocation>
</comment>
<comment type="similarity">
    <text evidence="1 2">Belongs to the TRAFAC class TrmE-Era-EngA-EngB-Septin-like GTPase superfamily. Era GTPase family.</text>
</comment>
<proteinExistence type="inferred from homology"/>
<sequence>MKSGFVSIIGRTNAGKSTLINSLLEEKIALVSHKQNATRRKIKAIVMHEKNQIIFIDTPGLHESGATLNQLLVQSAIKSMGDCDVILFVASVFDSTKDYENFLSLNPQVPHIIALNKVDLTDNATLLKKLSEYAKFSQHFKAIIPYSSKKKSYKKGLLDEIVKYLDKHEYFYDPEFLSASSEKELYRDFILESIYENLSDELPYSSEVLIHRTKDTPNLLILEANIITDTNSHKGMLIGKEGATLKRIGKDARFKISKLAQKKVLLKLFVTVKKNWQKDEEFLKKLLNDEN</sequence>
<keyword id="KW-0997">Cell inner membrane</keyword>
<keyword id="KW-1003">Cell membrane</keyword>
<keyword id="KW-0963">Cytoplasm</keyword>
<keyword id="KW-0342">GTP-binding</keyword>
<keyword id="KW-0472">Membrane</keyword>
<keyword id="KW-0547">Nucleotide-binding</keyword>
<keyword id="KW-0690">Ribosome biogenesis</keyword>
<keyword id="KW-0694">RNA-binding</keyword>
<keyword id="KW-0699">rRNA-binding</keyword>
<evidence type="ECO:0000255" key="1">
    <source>
        <dbReference type="HAMAP-Rule" id="MF_00367"/>
    </source>
</evidence>
<evidence type="ECO:0000255" key="2">
    <source>
        <dbReference type="PROSITE-ProRule" id="PRU01050"/>
    </source>
</evidence>
<gene>
    <name evidence="1" type="primary">era</name>
    <name type="ordered locus">C8J_0617</name>
</gene>